<sequence>MPKMKTKKSASKRFTARPGGTIKRGQAFKRHILTKKTTKNKRHLRGTEGVHETNLKSVRAMMPYA</sequence>
<gene>
    <name evidence="1" type="primary">rpmI</name>
    <name type="ordered locus">Rpic_1975</name>
</gene>
<organism>
    <name type="scientific">Ralstonia pickettii (strain 12J)</name>
    <dbReference type="NCBI Taxonomy" id="402626"/>
    <lineage>
        <taxon>Bacteria</taxon>
        <taxon>Pseudomonadati</taxon>
        <taxon>Pseudomonadota</taxon>
        <taxon>Betaproteobacteria</taxon>
        <taxon>Burkholderiales</taxon>
        <taxon>Burkholderiaceae</taxon>
        <taxon>Ralstonia</taxon>
    </lineage>
</organism>
<accession>B2UGJ6</accession>
<keyword id="KW-0687">Ribonucleoprotein</keyword>
<keyword id="KW-0689">Ribosomal protein</keyword>
<feature type="chain" id="PRO_1000127396" description="Large ribosomal subunit protein bL35">
    <location>
        <begin position="1"/>
        <end position="65"/>
    </location>
</feature>
<feature type="region of interest" description="Disordered" evidence="2">
    <location>
        <begin position="1"/>
        <end position="26"/>
    </location>
</feature>
<feature type="region of interest" description="Disordered" evidence="2">
    <location>
        <begin position="38"/>
        <end position="65"/>
    </location>
</feature>
<feature type="compositionally biased region" description="Basic residues" evidence="2">
    <location>
        <begin position="1"/>
        <end position="15"/>
    </location>
</feature>
<feature type="compositionally biased region" description="Basic and acidic residues" evidence="2">
    <location>
        <begin position="45"/>
        <end position="54"/>
    </location>
</feature>
<reference key="1">
    <citation type="submission" date="2008-05" db="EMBL/GenBank/DDBJ databases">
        <title>Complete sequence of chromosome 1 of Ralstonia pickettii 12J.</title>
        <authorList>
            <person name="Lucas S."/>
            <person name="Copeland A."/>
            <person name="Lapidus A."/>
            <person name="Glavina del Rio T."/>
            <person name="Dalin E."/>
            <person name="Tice H."/>
            <person name="Bruce D."/>
            <person name="Goodwin L."/>
            <person name="Pitluck S."/>
            <person name="Meincke L."/>
            <person name="Brettin T."/>
            <person name="Detter J.C."/>
            <person name="Han C."/>
            <person name="Kuske C.R."/>
            <person name="Schmutz J."/>
            <person name="Larimer F."/>
            <person name="Land M."/>
            <person name="Hauser L."/>
            <person name="Kyrpides N."/>
            <person name="Mikhailova N."/>
            <person name="Marsh T."/>
            <person name="Richardson P."/>
        </authorList>
    </citation>
    <scope>NUCLEOTIDE SEQUENCE [LARGE SCALE GENOMIC DNA]</scope>
    <source>
        <strain>12J</strain>
    </source>
</reference>
<name>RL35_RALPJ</name>
<protein>
    <recommendedName>
        <fullName evidence="1">Large ribosomal subunit protein bL35</fullName>
    </recommendedName>
    <alternativeName>
        <fullName evidence="3">50S ribosomal protein L35</fullName>
    </alternativeName>
</protein>
<dbReference type="EMBL" id="CP001068">
    <property type="protein sequence ID" value="ACD27110.1"/>
    <property type="molecule type" value="Genomic_DNA"/>
</dbReference>
<dbReference type="SMR" id="B2UGJ6"/>
<dbReference type="STRING" id="402626.Rpic_1975"/>
<dbReference type="KEGG" id="rpi:Rpic_1975"/>
<dbReference type="eggNOG" id="COG0291">
    <property type="taxonomic scope" value="Bacteria"/>
</dbReference>
<dbReference type="HOGENOM" id="CLU_169643_1_0_4"/>
<dbReference type="GO" id="GO:0022625">
    <property type="term" value="C:cytosolic large ribosomal subunit"/>
    <property type="evidence" value="ECO:0007669"/>
    <property type="project" value="TreeGrafter"/>
</dbReference>
<dbReference type="GO" id="GO:0003735">
    <property type="term" value="F:structural constituent of ribosome"/>
    <property type="evidence" value="ECO:0007669"/>
    <property type="project" value="InterPro"/>
</dbReference>
<dbReference type="GO" id="GO:0006412">
    <property type="term" value="P:translation"/>
    <property type="evidence" value="ECO:0007669"/>
    <property type="project" value="UniProtKB-UniRule"/>
</dbReference>
<dbReference type="FunFam" id="4.10.410.60:FF:000001">
    <property type="entry name" value="50S ribosomal protein L35"/>
    <property type="match status" value="1"/>
</dbReference>
<dbReference type="Gene3D" id="4.10.410.60">
    <property type="match status" value="1"/>
</dbReference>
<dbReference type="HAMAP" id="MF_00514">
    <property type="entry name" value="Ribosomal_bL35"/>
    <property type="match status" value="1"/>
</dbReference>
<dbReference type="InterPro" id="IPR001706">
    <property type="entry name" value="Ribosomal_bL35"/>
</dbReference>
<dbReference type="InterPro" id="IPR021137">
    <property type="entry name" value="Ribosomal_bL35-like"/>
</dbReference>
<dbReference type="InterPro" id="IPR018265">
    <property type="entry name" value="Ribosomal_bL35_CS"/>
</dbReference>
<dbReference type="InterPro" id="IPR037229">
    <property type="entry name" value="Ribosomal_bL35_sf"/>
</dbReference>
<dbReference type="NCBIfam" id="TIGR00001">
    <property type="entry name" value="rpmI_bact"/>
    <property type="match status" value="1"/>
</dbReference>
<dbReference type="PANTHER" id="PTHR33343">
    <property type="entry name" value="54S RIBOSOMAL PROTEIN BL35M"/>
    <property type="match status" value="1"/>
</dbReference>
<dbReference type="PANTHER" id="PTHR33343:SF1">
    <property type="entry name" value="LARGE RIBOSOMAL SUBUNIT PROTEIN BL35M"/>
    <property type="match status" value="1"/>
</dbReference>
<dbReference type="Pfam" id="PF01632">
    <property type="entry name" value="Ribosomal_L35p"/>
    <property type="match status" value="1"/>
</dbReference>
<dbReference type="PRINTS" id="PR00064">
    <property type="entry name" value="RIBOSOMALL35"/>
</dbReference>
<dbReference type="SUPFAM" id="SSF143034">
    <property type="entry name" value="L35p-like"/>
    <property type="match status" value="1"/>
</dbReference>
<dbReference type="PROSITE" id="PS00936">
    <property type="entry name" value="RIBOSOMAL_L35"/>
    <property type="match status" value="1"/>
</dbReference>
<comment type="similarity">
    <text evidence="1">Belongs to the bacterial ribosomal protein bL35 family.</text>
</comment>
<proteinExistence type="inferred from homology"/>
<evidence type="ECO:0000255" key="1">
    <source>
        <dbReference type="HAMAP-Rule" id="MF_00514"/>
    </source>
</evidence>
<evidence type="ECO:0000256" key="2">
    <source>
        <dbReference type="SAM" id="MobiDB-lite"/>
    </source>
</evidence>
<evidence type="ECO:0000305" key="3"/>